<protein>
    <recommendedName>
        <fullName evidence="1">Cysteine--tRNA ligase</fullName>
        <ecNumber evidence="1">6.1.1.16</ecNumber>
    </recommendedName>
    <alternativeName>
        <fullName evidence="1">Cysteinyl-tRNA synthetase</fullName>
        <shortName evidence="1">CysRS</shortName>
    </alternativeName>
</protein>
<sequence>MQIQFHLYNTLSRTKEVFNPQDQANVKMYVCGPTVYDNPHIGNGRSGVVYDLLYRIVIKIFGEKTVKYVRNITNVDDKIIDRAELLGVTIDELTDKVTKEFHKNMAYLGCMLPSIEPKATKHTDVMIAIIERLIAKEHAYVVDNHVYFDVLSAPNYTELSNRSLEEMFEGVHVENSKTKKNPQDFVLWKPAKQNESANMNFESPWGLGRPGWHIECSAMSYKYLGENFDIHGGGADLIFPHHTNEIAQSRCAFPSSTYAKYWVHNGFLTVNGEKMSKSLGNFITIRDLMDKQIQGEVVRLFLLSSHYRRPLDYNDKAIEDAKKTLDYWYRAIENINVQKIDLPHDFMQSLLDDMNTPLAVKIINDYAKGVFISKTEEERQLNASAIITCANFIGLMNKTPHEWFNSGVDELYINEFVNKRLEAKKQKNWLLADQIRNQLLEEKIILEDQPDGTTIWRKE</sequence>
<evidence type="ECO:0000255" key="1">
    <source>
        <dbReference type="HAMAP-Rule" id="MF_00041"/>
    </source>
</evidence>
<proteinExistence type="inferred from homology"/>
<comment type="catalytic activity">
    <reaction evidence="1">
        <text>tRNA(Cys) + L-cysteine + ATP = L-cysteinyl-tRNA(Cys) + AMP + diphosphate</text>
        <dbReference type="Rhea" id="RHEA:17773"/>
        <dbReference type="Rhea" id="RHEA-COMP:9661"/>
        <dbReference type="Rhea" id="RHEA-COMP:9679"/>
        <dbReference type="ChEBI" id="CHEBI:30616"/>
        <dbReference type="ChEBI" id="CHEBI:33019"/>
        <dbReference type="ChEBI" id="CHEBI:35235"/>
        <dbReference type="ChEBI" id="CHEBI:78442"/>
        <dbReference type="ChEBI" id="CHEBI:78517"/>
        <dbReference type="ChEBI" id="CHEBI:456215"/>
        <dbReference type="EC" id="6.1.1.16"/>
    </reaction>
</comment>
<comment type="cofactor">
    <cofactor evidence="1">
        <name>Zn(2+)</name>
        <dbReference type="ChEBI" id="CHEBI:29105"/>
    </cofactor>
    <text evidence="1">Binds 1 zinc ion per subunit.</text>
</comment>
<comment type="subunit">
    <text evidence="1">Monomer.</text>
</comment>
<comment type="subcellular location">
    <subcellularLocation>
        <location evidence="1">Cytoplasm</location>
    </subcellularLocation>
</comment>
<comment type="similarity">
    <text evidence="1">Belongs to the class-I aminoacyl-tRNA synthetase family.</text>
</comment>
<keyword id="KW-0030">Aminoacyl-tRNA synthetase</keyword>
<keyword id="KW-0067">ATP-binding</keyword>
<keyword id="KW-0963">Cytoplasm</keyword>
<keyword id="KW-0436">Ligase</keyword>
<keyword id="KW-0479">Metal-binding</keyword>
<keyword id="KW-0547">Nucleotide-binding</keyword>
<keyword id="KW-0648">Protein biosynthesis</keyword>
<keyword id="KW-0862">Zinc</keyword>
<feature type="chain" id="PRO_0000332889" description="Cysteine--tRNA ligase">
    <location>
        <begin position="1"/>
        <end position="459"/>
    </location>
</feature>
<feature type="short sequence motif" description="'HIGH' region">
    <location>
        <begin position="33"/>
        <end position="43"/>
    </location>
</feature>
<feature type="short sequence motif" description="'KMSKS' region">
    <location>
        <begin position="274"/>
        <end position="278"/>
    </location>
</feature>
<feature type="binding site" evidence="1">
    <location>
        <position position="31"/>
    </location>
    <ligand>
        <name>Zn(2+)</name>
        <dbReference type="ChEBI" id="CHEBI:29105"/>
    </ligand>
</feature>
<feature type="binding site" evidence="1">
    <location>
        <position position="216"/>
    </location>
    <ligand>
        <name>Zn(2+)</name>
        <dbReference type="ChEBI" id="CHEBI:29105"/>
    </ligand>
</feature>
<feature type="binding site" evidence="1">
    <location>
        <position position="241"/>
    </location>
    <ligand>
        <name>Zn(2+)</name>
        <dbReference type="ChEBI" id="CHEBI:29105"/>
    </ligand>
</feature>
<feature type="binding site" evidence="1">
    <location>
        <position position="245"/>
    </location>
    <ligand>
        <name>Zn(2+)</name>
        <dbReference type="ChEBI" id="CHEBI:29105"/>
    </ligand>
</feature>
<feature type="binding site" evidence="1">
    <location>
        <position position="277"/>
    </location>
    <ligand>
        <name>ATP</name>
        <dbReference type="ChEBI" id="CHEBI:30616"/>
    </ligand>
</feature>
<reference key="1">
    <citation type="journal article" date="2007" name="Genome Res.">
        <title>Lateral gene transfer between obligate intracellular bacteria: evidence from the Rickettsia massiliae genome.</title>
        <authorList>
            <person name="Blanc G."/>
            <person name="Ogata H."/>
            <person name="Robert C."/>
            <person name="Audic S."/>
            <person name="Claverie J.-M."/>
            <person name="Raoult D."/>
        </authorList>
    </citation>
    <scope>NUCLEOTIDE SEQUENCE [LARGE SCALE GENOMIC DNA]</scope>
    <source>
        <strain>Mtu5</strain>
    </source>
</reference>
<organism>
    <name type="scientific">Rickettsia massiliae (strain Mtu5)</name>
    <dbReference type="NCBI Taxonomy" id="416276"/>
    <lineage>
        <taxon>Bacteria</taxon>
        <taxon>Pseudomonadati</taxon>
        <taxon>Pseudomonadota</taxon>
        <taxon>Alphaproteobacteria</taxon>
        <taxon>Rickettsiales</taxon>
        <taxon>Rickettsiaceae</taxon>
        <taxon>Rickettsieae</taxon>
        <taxon>Rickettsia</taxon>
        <taxon>spotted fever group</taxon>
    </lineage>
</organism>
<name>SYC_RICM5</name>
<dbReference type="EC" id="6.1.1.16" evidence="1"/>
<dbReference type="EMBL" id="CP000683">
    <property type="protein sequence ID" value="ABV84424.1"/>
    <property type="molecule type" value="Genomic_DNA"/>
</dbReference>
<dbReference type="RefSeq" id="WP_012152404.1">
    <property type="nucleotide sequence ID" value="NC_009900.1"/>
</dbReference>
<dbReference type="SMR" id="A8F0I8"/>
<dbReference type="KEGG" id="rms:RMA_0120"/>
<dbReference type="HOGENOM" id="CLU_013528_0_1_5"/>
<dbReference type="Proteomes" id="UP000001311">
    <property type="component" value="Chromosome"/>
</dbReference>
<dbReference type="GO" id="GO:0005829">
    <property type="term" value="C:cytosol"/>
    <property type="evidence" value="ECO:0007669"/>
    <property type="project" value="TreeGrafter"/>
</dbReference>
<dbReference type="GO" id="GO:0005524">
    <property type="term" value="F:ATP binding"/>
    <property type="evidence" value="ECO:0007669"/>
    <property type="project" value="UniProtKB-UniRule"/>
</dbReference>
<dbReference type="GO" id="GO:0004817">
    <property type="term" value="F:cysteine-tRNA ligase activity"/>
    <property type="evidence" value="ECO:0007669"/>
    <property type="project" value="UniProtKB-UniRule"/>
</dbReference>
<dbReference type="GO" id="GO:0008270">
    <property type="term" value="F:zinc ion binding"/>
    <property type="evidence" value="ECO:0007669"/>
    <property type="project" value="UniProtKB-UniRule"/>
</dbReference>
<dbReference type="GO" id="GO:0006423">
    <property type="term" value="P:cysteinyl-tRNA aminoacylation"/>
    <property type="evidence" value="ECO:0007669"/>
    <property type="project" value="UniProtKB-UniRule"/>
</dbReference>
<dbReference type="CDD" id="cd00672">
    <property type="entry name" value="CysRS_core"/>
    <property type="match status" value="1"/>
</dbReference>
<dbReference type="Gene3D" id="1.20.120.1910">
    <property type="entry name" value="Cysteine-tRNA ligase, C-terminal anti-codon recognition domain"/>
    <property type="match status" value="1"/>
</dbReference>
<dbReference type="Gene3D" id="3.40.50.620">
    <property type="entry name" value="HUPs"/>
    <property type="match status" value="1"/>
</dbReference>
<dbReference type="HAMAP" id="MF_00041">
    <property type="entry name" value="Cys_tRNA_synth"/>
    <property type="match status" value="1"/>
</dbReference>
<dbReference type="InterPro" id="IPR015803">
    <property type="entry name" value="Cys-tRNA-ligase"/>
</dbReference>
<dbReference type="InterPro" id="IPR015273">
    <property type="entry name" value="Cys-tRNA-synt_Ia_DALR"/>
</dbReference>
<dbReference type="InterPro" id="IPR024909">
    <property type="entry name" value="Cys-tRNA/MSH_ligase"/>
</dbReference>
<dbReference type="InterPro" id="IPR014729">
    <property type="entry name" value="Rossmann-like_a/b/a_fold"/>
</dbReference>
<dbReference type="InterPro" id="IPR032678">
    <property type="entry name" value="tRNA-synt_1_cat_dom"/>
</dbReference>
<dbReference type="InterPro" id="IPR009080">
    <property type="entry name" value="tRNAsynth_Ia_anticodon-bd"/>
</dbReference>
<dbReference type="NCBIfam" id="TIGR00435">
    <property type="entry name" value="cysS"/>
    <property type="match status" value="1"/>
</dbReference>
<dbReference type="PANTHER" id="PTHR10890:SF3">
    <property type="entry name" value="CYSTEINE--TRNA LIGASE, CYTOPLASMIC"/>
    <property type="match status" value="1"/>
</dbReference>
<dbReference type="PANTHER" id="PTHR10890">
    <property type="entry name" value="CYSTEINYL-TRNA SYNTHETASE"/>
    <property type="match status" value="1"/>
</dbReference>
<dbReference type="Pfam" id="PF01406">
    <property type="entry name" value="tRNA-synt_1e"/>
    <property type="match status" value="1"/>
</dbReference>
<dbReference type="PRINTS" id="PR00983">
    <property type="entry name" value="TRNASYNTHCYS"/>
</dbReference>
<dbReference type="SMART" id="SM00840">
    <property type="entry name" value="DALR_2"/>
    <property type="match status" value="1"/>
</dbReference>
<dbReference type="SUPFAM" id="SSF47323">
    <property type="entry name" value="Anticodon-binding domain of a subclass of class I aminoacyl-tRNA synthetases"/>
    <property type="match status" value="1"/>
</dbReference>
<dbReference type="SUPFAM" id="SSF52374">
    <property type="entry name" value="Nucleotidylyl transferase"/>
    <property type="match status" value="1"/>
</dbReference>
<accession>A8F0I8</accession>
<gene>
    <name evidence="1" type="primary">cysS</name>
    <name type="ordered locus">RMA_0120</name>
</gene>